<name>NUSB_WOLSU</name>
<organism>
    <name type="scientific">Wolinella succinogenes (strain ATCC 29543 / DSM 1740 / CCUG 13145 / JCM 31913 / LMG 7466 / NCTC 11488 / FDC 602W)</name>
    <name type="common">Vibrio succinogenes</name>
    <dbReference type="NCBI Taxonomy" id="273121"/>
    <lineage>
        <taxon>Bacteria</taxon>
        <taxon>Pseudomonadati</taxon>
        <taxon>Campylobacterota</taxon>
        <taxon>Epsilonproteobacteria</taxon>
        <taxon>Campylobacterales</taxon>
        <taxon>Helicobacteraceae</taxon>
        <taxon>Wolinella</taxon>
    </lineage>
</organism>
<keyword id="KW-1185">Reference proteome</keyword>
<keyword id="KW-0694">RNA-binding</keyword>
<keyword id="KW-0804">Transcription</keyword>
<keyword id="KW-0889">Transcription antitermination</keyword>
<keyword id="KW-0805">Transcription regulation</keyword>
<evidence type="ECO:0000255" key="1">
    <source>
        <dbReference type="HAMAP-Rule" id="MF_00073"/>
    </source>
</evidence>
<proteinExistence type="inferred from homology"/>
<gene>
    <name evidence="1" type="primary">nusB</name>
    <name type="ordered locus">WS0296</name>
</gene>
<feature type="chain" id="PRO_0000176607" description="Transcription antitermination protein NusB">
    <location>
        <begin position="1"/>
        <end position="135"/>
    </location>
</feature>
<protein>
    <recommendedName>
        <fullName evidence="1">Transcription antitermination protein NusB</fullName>
    </recommendedName>
    <alternativeName>
        <fullName evidence="1">Antitermination factor NusB</fullName>
    </alternativeName>
</protein>
<accession>Q7MAE9</accession>
<dbReference type="EMBL" id="BX571657">
    <property type="protein sequence ID" value="CAE09447.1"/>
    <property type="molecule type" value="Genomic_DNA"/>
</dbReference>
<dbReference type="RefSeq" id="WP_011138248.1">
    <property type="nucleotide sequence ID" value="NC_005090.1"/>
</dbReference>
<dbReference type="SMR" id="Q7MAE9"/>
<dbReference type="STRING" id="273121.WS0296"/>
<dbReference type="KEGG" id="wsu:WS0296"/>
<dbReference type="eggNOG" id="COG0781">
    <property type="taxonomic scope" value="Bacteria"/>
</dbReference>
<dbReference type="HOGENOM" id="CLU_087843_3_3_7"/>
<dbReference type="Proteomes" id="UP000000422">
    <property type="component" value="Chromosome"/>
</dbReference>
<dbReference type="GO" id="GO:0005829">
    <property type="term" value="C:cytosol"/>
    <property type="evidence" value="ECO:0007669"/>
    <property type="project" value="TreeGrafter"/>
</dbReference>
<dbReference type="GO" id="GO:0003723">
    <property type="term" value="F:RNA binding"/>
    <property type="evidence" value="ECO:0007669"/>
    <property type="project" value="UniProtKB-UniRule"/>
</dbReference>
<dbReference type="GO" id="GO:0006353">
    <property type="term" value="P:DNA-templated transcription termination"/>
    <property type="evidence" value="ECO:0007669"/>
    <property type="project" value="UniProtKB-UniRule"/>
</dbReference>
<dbReference type="GO" id="GO:0031564">
    <property type="term" value="P:transcription antitermination"/>
    <property type="evidence" value="ECO:0007669"/>
    <property type="project" value="UniProtKB-KW"/>
</dbReference>
<dbReference type="Gene3D" id="1.10.940.10">
    <property type="entry name" value="NusB-like"/>
    <property type="match status" value="1"/>
</dbReference>
<dbReference type="HAMAP" id="MF_00073">
    <property type="entry name" value="NusB"/>
    <property type="match status" value="1"/>
</dbReference>
<dbReference type="InterPro" id="IPR035926">
    <property type="entry name" value="NusB-like_sf"/>
</dbReference>
<dbReference type="InterPro" id="IPR011605">
    <property type="entry name" value="NusB_fam"/>
</dbReference>
<dbReference type="InterPro" id="IPR006027">
    <property type="entry name" value="NusB_RsmB_TIM44"/>
</dbReference>
<dbReference type="NCBIfam" id="TIGR01951">
    <property type="entry name" value="nusB"/>
    <property type="match status" value="1"/>
</dbReference>
<dbReference type="PANTHER" id="PTHR11078:SF3">
    <property type="entry name" value="ANTITERMINATION NUSB DOMAIN-CONTAINING PROTEIN"/>
    <property type="match status" value="1"/>
</dbReference>
<dbReference type="PANTHER" id="PTHR11078">
    <property type="entry name" value="N UTILIZATION SUBSTANCE PROTEIN B-RELATED"/>
    <property type="match status" value="1"/>
</dbReference>
<dbReference type="Pfam" id="PF01029">
    <property type="entry name" value="NusB"/>
    <property type="match status" value="1"/>
</dbReference>
<dbReference type="SUPFAM" id="SSF48013">
    <property type="entry name" value="NusB-like"/>
    <property type="match status" value="1"/>
</dbReference>
<sequence length="135" mass="15429">MATRAQAREAVVSLLYAYDMGNTEIRKFAIELLEEKRIKNRQQEFALELFDGTIAHLGEIDEEIKKHLKEWDFSRIGDMERAILRLGTFEIVYSGVDRAVIINEAVELSKTFGNDNSPRFVNGVLDALRPDLKKG</sequence>
<reference key="1">
    <citation type="journal article" date="2003" name="Proc. Natl. Acad. Sci. U.S.A.">
        <title>Complete genome sequence and analysis of Wolinella succinogenes.</title>
        <authorList>
            <person name="Baar C."/>
            <person name="Eppinger M."/>
            <person name="Raddatz G."/>
            <person name="Simon J."/>
            <person name="Lanz C."/>
            <person name="Klimmek O."/>
            <person name="Nandakumar R."/>
            <person name="Gross R."/>
            <person name="Rosinus A."/>
            <person name="Keller H."/>
            <person name="Jagtap P."/>
            <person name="Linke B."/>
            <person name="Meyer F."/>
            <person name="Lederer H."/>
            <person name="Schuster S.C."/>
        </authorList>
    </citation>
    <scope>NUCLEOTIDE SEQUENCE [LARGE SCALE GENOMIC DNA]</scope>
    <source>
        <strain>ATCC 29543 / DSM 1740 / CCUG 13145 / JCM 31913 / LMG 7466 / NCTC 11488 / FDC 602W</strain>
    </source>
</reference>
<comment type="function">
    <text evidence="1">Involved in transcription antitermination. Required for transcription of ribosomal RNA (rRNA) genes. Binds specifically to the boxA antiterminator sequence of the ribosomal RNA (rrn) operons.</text>
</comment>
<comment type="similarity">
    <text evidence="1">Belongs to the NusB family.</text>
</comment>